<accession>Q6C1T4</accession>
<keyword id="KW-0963">Cytoplasm</keyword>
<keyword id="KW-0378">Hydrolase</keyword>
<keyword id="KW-0460">Magnesium</keyword>
<keyword id="KW-0479">Metal-binding</keyword>
<keyword id="KW-1185">Reference proteome</keyword>
<sequence length="287" mass="32140">MSTYTTRSIGAPNTLDYKVYIEKDGKPVSAFHDIPLYANAEKTILNMIVEVPRWTNAKMEISKDLALNPIIQDTKKGKLRFVRNCFPHHGYIHNYGAFPQTWEDPNHVHPETKAKGDNDPLDVCEIGETVGYTGQVKQVKVLGVMALLDEGETDWKIIAIDVKDPLASKVNDIEDVERHLPGLLRATNEWFRIYKIPDGKPENQFAFSGECKNKKYADEVIRECEEAWETLIAGKASDDKGISLENTTLENTPTFTASASIPEGQNLAPAPIDQSIDKWFYISGASV</sequence>
<name>IPYR_YARLI</name>
<proteinExistence type="inferred from homology"/>
<feature type="chain" id="PRO_0000137587" description="Inorganic pyrophosphatase">
    <location>
        <begin position="1"/>
        <end position="287"/>
    </location>
</feature>
<feature type="binding site" evidence="1">
    <location>
        <position position="80"/>
    </location>
    <ligand>
        <name>diphosphate</name>
        <dbReference type="ChEBI" id="CHEBI:33019"/>
    </ligand>
</feature>
<feature type="binding site" evidence="1">
    <location>
        <position position="117"/>
    </location>
    <ligand>
        <name>Mg(2+)</name>
        <dbReference type="ChEBI" id="CHEBI:18420"/>
        <label>1</label>
    </ligand>
</feature>
<feature type="binding site" evidence="1">
    <location>
        <position position="122"/>
    </location>
    <ligand>
        <name>Mg(2+)</name>
        <dbReference type="ChEBI" id="CHEBI:18420"/>
        <label>1</label>
    </ligand>
</feature>
<feature type="binding site" evidence="1">
    <location>
        <position position="122"/>
    </location>
    <ligand>
        <name>Mg(2+)</name>
        <dbReference type="ChEBI" id="CHEBI:18420"/>
        <label>2</label>
    </ligand>
</feature>
<feature type="binding site" evidence="1">
    <location>
        <position position="154"/>
    </location>
    <ligand>
        <name>Mg(2+)</name>
        <dbReference type="ChEBI" id="CHEBI:18420"/>
        <label>1</label>
    </ligand>
</feature>
<evidence type="ECO:0000250" key="1"/>
<evidence type="ECO:0000305" key="2"/>
<organism>
    <name type="scientific">Yarrowia lipolytica (strain CLIB 122 / E 150)</name>
    <name type="common">Yeast</name>
    <name type="synonym">Candida lipolytica</name>
    <dbReference type="NCBI Taxonomy" id="284591"/>
    <lineage>
        <taxon>Eukaryota</taxon>
        <taxon>Fungi</taxon>
        <taxon>Dikarya</taxon>
        <taxon>Ascomycota</taxon>
        <taxon>Saccharomycotina</taxon>
        <taxon>Dipodascomycetes</taxon>
        <taxon>Dipodascales</taxon>
        <taxon>Dipodascales incertae sedis</taxon>
        <taxon>Yarrowia</taxon>
    </lineage>
</organism>
<reference key="1">
    <citation type="journal article" date="2004" name="Nature">
        <title>Genome evolution in yeasts.</title>
        <authorList>
            <person name="Dujon B."/>
            <person name="Sherman D."/>
            <person name="Fischer G."/>
            <person name="Durrens P."/>
            <person name="Casaregola S."/>
            <person name="Lafontaine I."/>
            <person name="de Montigny J."/>
            <person name="Marck C."/>
            <person name="Neuveglise C."/>
            <person name="Talla E."/>
            <person name="Goffard N."/>
            <person name="Frangeul L."/>
            <person name="Aigle M."/>
            <person name="Anthouard V."/>
            <person name="Babour A."/>
            <person name="Barbe V."/>
            <person name="Barnay S."/>
            <person name="Blanchin S."/>
            <person name="Beckerich J.-M."/>
            <person name="Beyne E."/>
            <person name="Bleykasten C."/>
            <person name="Boisrame A."/>
            <person name="Boyer J."/>
            <person name="Cattolico L."/>
            <person name="Confanioleri F."/>
            <person name="de Daruvar A."/>
            <person name="Despons L."/>
            <person name="Fabre E."/>
            <person name="Fairhead C."/>
            <person name="Ferry-Dumazet H."/>
            <person name="Groppi A."/>
            <person name="Hantraye F."/>
            <person name="Hennequin C."/>
            <person name="Jauniaux N."/>
            <person name="Joyet P."/>
            <person name="Kachouri R."/>
            <person name="Kerrest A."/>
            <person name="Koszul R."/>
            <person name="Lemaire M."/>
            <person name="Lesur I."/>
            <person name="Ma L."/>
            <person name="Muller H."/>
            <person name="Nicaud J.-M."/>
            <person name="Nikolski M."/>
            <person name="Oztas S."/>
            <person name="Ozier-Kalogeropoulos O."/>
            <person name="Pellenz S."/>
            <person name="Potier S."/>
            <person name="Richard G.-F."/>
            <person name="Straub M.-L."/>
            <person name="Suleau A."/>
            <person name="Swennen D."/>
            <person name="Tekaia F."/>
            <person name="Wesolowski-Louvel M."/>
            <person name="Westhof E."/>
            <person name="Wirth B."/>
            <person name="Zeniou-Meyer M."/>
            <person name="Zivanovic Y."/>
            <person name="Bolotin-Fukuhara M."/>
            <person name="Thierry A."/>
            <person name="Bouchier C."/>
            <person name="Caudron B."/>
            <person name="Scarpelli C."/>
            <person name="Gaillardin C."/>
            <person name="Weissenbach J."/>
            <person name="Wincker P."/>
            <person name="Souciet J.-L."/>
        </authorList>
    </citation>
    <scope>NUCLEOTIDE SEQUENCE [LARGE SCALE GENOMIC DNA]</scope>
    <source>
        <strain>CLIB 122 / E 150</strain>
    </source>
</reference>
<protein>
    <recommendedName>
        <fullName>Inorganic pyrophosphatase</fullName>
        <ecNumber>3.6.1.1</ecNumber>
    </recommendedName>
    <alternativeName>
        <fullName>Pyrophosphate phospho-hydrolase</fullName>
        <shortName>PPase</shortName>
    </alternativeName>
</protein>
<comment type="catalytic activity">
    <reaction>
        <text>diphosphate + H2O = 2 phosphate + H(+)</text>
        <dbReference type="Rhea" id="RHEA:24576"/>
        <dbReference type="ChEBI" id="CHEBI:15377"/>
        <dbReference type="ChEBI" id="CHEBI:15378"/>
        <dbReference type="ChEBI" id="CHEBI:33019"/>
        <dbReference type="ChEBI" id="CHEBI:43474"/>
        <dbReference type="EC" id="3.6.1.1"/>
    </reaction>
</comment>
<comment type="cofactor">
    <cofactor evidence="1">
        <name>Mg(2+)</name>
        <dbReference type="ChEBI" id="CHEBI:18420"/>
    </cofactor>
</comment>
<comment type="subcellular location">
    <subcellularLocation>
        <location evidence="1">Cytoplasm</location>
    </subcellularLocation>
</comment>
<comment type="similarity">
    <text evidence="2">Belongs to the PPase family.</text>
</comment>
<gene>
    <name type="primary">IPP1</name>
    <name type="ordered locus">YALI0F13541g</name>
</gene>
<dbReference type="EC" id="3.6.1.1"/>
<dbReference type="EMBL" id="CR382132">
    <property type="protein sequence ID" value="CAG78185.1"/>
    <property type="molecule type" value="Genomic_DNA"/>
</dbReference>
<dbReference type="RefSeq" id="XP_505378.1">
    <property type="nucleotide sequence ID" value="XM_505378.1"/>
</dbReference>
<dbReference type="SMR" id="Q6C1T4"/>
<dbReference type="FunCoup" id="Q6C1T4">
    <property type="interactions" value="1050"/>
</dbReference>
<dbReference type="STRING" id="284591.Q6C1T4"/>
<dbReference type="EnsemblFungi" id="CAG78185">
    <property type="protein sequence ID" value="CAG78185"/>
    <property type="gene ID" value="YALI0_F13541g"/>
</dbReference>
<dbReference type="KEGG" id="yli:2908324"/>
<dbReference type="VEuPathDB" id="FungiDB:YALI0_F13541g"/>
<dbReference type="HOGENOM" id="CLU_040684_0_1_1"/>
<dbReference type="InParanoid" id="Q6C1T4"/>
<dbReference type="OMA" id="LYANEQK"/>
<dbReference type="OrthoDB" id="102567at4891"/>
<dbReference type="Proteomes" id="UP000001300">
    <property type="component" value="Chromosome F"/>
</dbReference>
<dbReference type="GO" id="GO:0005737">
    <property type="term" value="C:cytoplasm"/>
    <property type="evidence" value="ECO:0007669"/>
    <property type="project" value="UniProtKB-SubCell"/>
</dbReference>
<dbReference type="GO" id="GO:0004427">
    <property type="term" value="F:inorganic diphosphate phosphatase activity"/>
    <property type="evidence" value="ECO:0000318"/>
    <property type="project" value="GO_Central"/>
</dbReference>
<dbReference type="GO" id="GO:0000287">
    <property type="term" value="F:magnesium ion binding"/>
    <property type="evidence" value="ECO:0007669"/>
    <property type="project" value="InterPro"/>
</dbReference>
<dbReference type="GO" id="GO:0006796">
    <property type="term" value="P:phosphate-containing compound metabolic process"/>
    <property type="evidence" value="ECO:0000318"/>
    <property type="project" value="GO_Central"/>
</dbReference>
<dbReference type="CDD" id="cd00412">
    <property type="entry name" value="pyrophosphatase"/>
    <property type="match status" value="1"/>
</dbReference>
<dbReference type="FunFam" id="3.90.80.10:FF:000004">
    <property type="entry name" value="Inorganic pyrophosphatase"/>
    <property type="match status" value="1"/>
</dbReference>
<dbReference type="Gene3D" id="3.90.80.10">
    <property type="entry name" value="Inorganic pyrophosphatase"/>
    <property type="match status" value="1"/>
</dbReference>
<dbReference type="InterPro" id="IPR008162">
    <property type="entry name" value="Pyrophosphatase"/>
</dbReference>
<dbReference type="InterPro" id="IPR036649">
    <property type="entry name" value="Pyrophosphatase_sf"/>
</dbReference>
<dbReference type="PANTHER" id="PTHR10286">
    <property type="entry name" value="INORGANIC PYROPHOSPHATASE"/>
    <property type="match status" value="1"/>
</dbReference>
<dbReference type="Pfam" id="PF00719">
    <property type="entry name" value="Pyrophosphatase"/>
    <property type="match status" value="1"/>
</dbReference>
<dbReference type="SUPFAM" id="SSF50324">
    <property type="entry name" value="Inorganic pyrophosphatase"/>
    <property type="match status" value="1"/>
</dbReference>
<dbReference type="PROSITE" id="PS00387">
    <property type="entry name" value="PPASE"/>
    <property type="match status" value="1"/>
</dbReference>